<evidence type="ECO:0000255" key="1">
    <source>
        <dbReference type="HAMAP-Rule" id="MF_01080"/>
    </source>
</evidence>
<keyword id="KW-0413">Isomerase</keyword>
<keyword id="KW-1185">Reference proteome</keyword>
<keyword id="KW-0819">tRNA processing</keyword>
<sequence>MSKPRSNRRHIDGVLLIDKPYDISSNNALQKARWLLNAAKAGHTGVLDPLATGLLPVCLGEATKFSSYLLDADKGYRATVRFGVVTTTGDVEGEVVSERPVEFGREQLEAALARFRGEISQVPPMYSALKHQGKPLYEYARAGIEVPREARQVTIRKLELLSFDGVSAEIDVLCTKGTYIRTLGCDIGEALGCGAHLTALRRTATGGFSLDESHRLADLESLDMPAREALLMPADVLVMHFPQLELADEEIGKFLHGQPVRFEQKCEKMQRFRVYQQSSRRFVGLGEARGDGRLHPIRLLANQAQA</sequence>
<accession>Q7MBF7</accession>
<dbReference type="EC" id="5.4.99.25" evidence="1"/>
<dbReference type="EMBL" id="AE016825">
    <property type="protein sequence ID" value="AAQ59139.1"/>
    <property type="molecule type" value="Genomic_DNA"/>
</dbReference>
<dbReference type="RefSeq" id="WP_011135016.1">
    <property type="nucleotide sequence ID" value="NC_005085.1"/>
</dbReference>
<dbReference type="SMR" id="Q7MBF7"/>
<dbReference type="STRING" id="243365.CV_1464"/>
<dbReference type="GeneID" id="66367159"/>
<dbReference type="KEGG" id="cvi:CV_1464"/>
<dbReference type="eggNOG" id="COG0130">
    <property type="taxonomic scope" value="Bacteria"/>
</dbReference>
<dbReference type="HOGENOM" id="CLU_032087_0_3_4"/>
<dbReference type="OrthoDB" id="9802309at2"/>
<dbReference type="Proteomes" id="UP000001424">
    <property type="component" value="Chromosome"/>
</dbReference>
<dbReference type="GO" id="GO:0003723">
    <property type="term" value="F:RNA binding"/>
    <property type="evidence" value="ECO:0007669"/>
    <property type="project" value="InterPro"/>
</dbReference>
<dbReference type="GO" id="GO:0160148">
    <property type="term" value="F:tRNA pseudouridine(55) synthase activity"/>
    <property type="evidence" value="ECO:0007669"/>
    <property type="project" value="UniProtKB-EC"/>
</dbReference>
<dbReference type="GO" id="GO:1990481">
    <property type="term" value="P:mRNA pseudouridine synthesis"/>
    <property type="evidence" value="ECO:0007669"/>
    <property type="project" value="TreeGrafter"/>
</dbReference>
<dbReference type="GO" id="GO:0031119">
    <property type="term" value="P:tRNA pseudouridine synthesis"/>
    <property type="evidence" value="ECO:0007669"/>
    <property type="project" value="UniProtKB-UniRule"/>
</dbReference>
<dbReference type="CDD" id="cd02573">
    <property type="entry name" value="PseudoU_synth_EcTruB"/>
    <property type="match status" value="1"/>
</dbReference>
<dbReference type="CDD" id="cd21152">
    <property type="entry name" value="PUA_TruB_bacterial"/>
    <property type="match status" value="1"/>
</dbReference>
<dbReference type="FunFam" id="3.30.2350.10:FF:000011">
    <property type="entry name" value="tRNA pseudouridine synthase B"/>
    <property type="match status" value="1"/>
</dbReference>
<dbReference type="Gene3D" id="3.30.2350.10">
    <property type="entry name" value="Pseudouridine synthase"/>
    <property type="match status" value="1"/>
</dbReference>
<dbReference type="Gene3D" id="2.30.130.10">
    <property type="entry name" value="PUA domain"/>
    <property type="match status" value="1"/>
</dbReference>
<dbReference type="HAMAP" id="MF_01080">
    <property type="entry name" value="TruB_bact"/>
    <property type="match status" value="1"/>
</dbReference>
<dbReference type="InterPro" id="IPR020103">
    <property type="entry name" value="PsdUridine_synth_cat_dom_sf"/>
</dbReference>
<dbReference type="InterPro" id="IPR002501">
    <property type="entry name" value="PsdUridine_synth_N"/>
</dbReference>
<dbReference type="InterPro" id="IPR015947">
    <property type="entry name" value="PUA-like_sf"/>
</dbReference>
<dbReference type="InterPro" id="IPR036974">
    <property type="entry name" value="PUA_sf"/>
</dbReference>
<dbReference type="InterPro" id="IPR014780">
    <property type="entry name" value="tRNA_psdUridine_synth_TruB"/>
</dbReference>
<dbReference type="InterPro" id="IPR015240">
    <property type="entry name" value="tRNA_sdUridine_synth_fam1_C"/>
</dbReference>
<dbReference type="InterPro" id="IPR032819">
    <property type="entry name" value="TruB_C"/>
</dbReference>
<dbReference type="NCBIfam" id="TIGR00431">
    <property type="entry name" value="TruB"/>
    <property type="match status" value="1"/>
</dbReference>
<dbReference type="PANTHER" id="PTHR13767:SF2">
    <property type="entry name" value="PSEUDOURIDYLATE SYNTHASE TRUB1"/>
    <property type="match status" value="1"/>
</dbReference>
<dbReference type="PANTHER" id="PTHR13767">
    <property type="entry name" value="TRNA-PSEUDOURIDINE SYNTHASE"/>
    <property type="match status" value="1"/>
</dbReference>
<dbReference type="Pfam" id="PF09157">
    <property type="entry name" value="TruB-C_2"/>
    <property type="match status" value="1"/>
</dbReference>
<dbReference type="Pfam" id="PF16198">
    <property type="entry name" value="TruB_C_2"/>
    <property type="match status" value="1"/>
</dbReference>
<dbReference type="Pfam" id="PF01509">
    <property type="entry name" value="TruB_N"/>
    <property type="match status" value="1"/>
</dbReference>
<dbReference type="SUPFAM" id="SSF55120">
    <property type="entry name" value="Pseudouridine synthase"/>
    <property type="match status" value="1"/>
</dbReference>
<dbReference type="SUPFAM" id="SSF88697">
    <property type="entry name" value="PUA domain-like"/>
    <property type="match status" value="1"/>
</dbReference>
<proteinExistence type="inferred from homology"/>
<reference key="1">
    <citation type="journal article" date="2003" name="Proc. Natl. Acad. Sci. U.S.A.">
        <title>The complete genome sequence of Chromobacterium violaceum reveals remarkable and exploitable bacterial adaptability.</title>
        <authorList>
            <person name="Vasconcelos A.T.R."/>
            <person name="de Almeida D.F."/>
            <person name="Hungria M."/>
            <person name="Guimaraes C.T."/>
            <person name="Antonio R.V."/>
            <person name="Almeida F.C."/>
            <person name="de Almeida L.G.P."/>
            <person name="de Almeida R."/>
            <person name="Alves-Gomes J.A."/>
            <person name="Andrade E.M."/>
            <person name="Araripe J."/>
            <person name="de Araujo M.F.F."/>
            <person name="Astolfi-Filho S."/>
            <person name="Azevedo V."/>
            <person name="Baptista A.J."/>
            <person name="Bataus L.A.M."/>
            <person name="Batista J.S."/>
            <person name="Belo A."/>
            <person name="van den Berg C."/>
            <person name="Bogo M."/>
            <person name="Bonatto S."/>
            <person name="Bordignon J."/>
            <person name="Brigido M.M."/>
            <person name="Brito C.A."/>
            <person name="Brocchi M."/>
            <person name="Burity H.A."/>
            <person name="Camargo A.A."/>
            <person name="Cardoso D.D.P."/>
            <person name="Carneiro N.P."/>
            <person name="Carraro D.M."/>
            <person name="Carvalho C.M.B."/>
            <person name="Cascardo J.C.M."/>
            <person name="Cavada B.S."/>
            <person name="Chueire L.M.O."/>
            <person name="Creczynski-Pasa T.B."/>
            <person name="Cunha-Junior N.C."/>
            <person name="Fagundes N."/>
            <person name="Falcao C.L."/>
            <person name="Fantinatti F."/>
            <person name="Farias I.P."/>
            <person name="Felipe M.S.S."/>
            <person name="Ferrari L.P."/>
            <person name="Ferro J.A."/>
            <person name="Ferro M.I.T."/>
            <person name="Franco G.R."/>
            <person name="Freitas N.S.A."/>
            <person name="Furlan L.R."/>
            <person name="Gazzinelli R.T."/>
            <person name="Gomes E.A."/>
            <person name="Goncalves P.R."/>
            <person name="Grangeiro T.B."/>
            <person name="Grattapaglia D."/>
            <person name="Grisard E.C."/>
            <person name="Hanna E.S."/>
            <person name="Jardim S.N."/>
            <person name="Laurino J."/>
            <person name="Leoi L.C.T."/>
            <person name="Lima L.F.A."/>
            <person name="Loureiro M.F."/>
            <person name="Lyra M.C.C.P."/>
            <person name="Madeira H.M.F."/>
            <person name="Manfio G.P."/>
            <person name="Maranhao A.Q."/>
            <person name="Martins W.S."/>
            <person name="di Mauro S.M.Z."/>
            <person name="de Medeiros S.R.B."/>
            <person name="Meissner R.V."/>
            <person name="Moreira M.A.M."/>
            <person name="Nascimento F.F."/>
            <person name="Nicolas M.F."/>
            <person name="Oliveira J.G."/>
            <person name="Oliveira S.C."/>
            <person name="Paixao R.F.C."/>
            <person name="Parente J.A."/>
            <person name="Pedrosa F.O."/>
            <person name="Pena S.D.J."/>
            <person name="Pereira J.O."/>
            <person name="Pereira M."/>
            <person name="Pinto L.S.R.C."/>
            <person name="Pinto L.S."/>
            <person name="Porto J.I.R."/>
            <person name="Potrich D.P."/>
            <person name="Ramalho-Neto C.E."/>
            <person name="Reis A.M.M."/>
            <person name="Rigo L.U."/>
            <person name="Rondinelli E."/>
            <person name="Santos E.B.P."/>
            <person name="Santos F.R."/>
            <person name="Schneider M.P.C."/>
            <person name="Seuanez H.N."/>
            <person name="Silva A.M.R."/>
            <person name="da Silva A.L.C."/>
            <person name="Silva D.W."/>
            <person name="Silva R."/>
            <person name="Simoes I.C."/>
            <person name="Simon D."/>
            <person name="Soares C.M.A."/>
            <person name="Soares R.B.A."/>
            <person name="Souza E.M."/>
            <person name="Souza K.R.L."/>
            <person name="Souza R.C."/>
            <person name="Steffens M.B.R."/>
            <person name="Steindel M."/>
            <person name="Teixeira S.R."/>
            <person name="Urmenyi T."/>
            <person name="Vettore A."/>
            <person name="Wassem R."/>
            <person name="Zaha A."/>
            <person name="Simpson A.J.G."/>
        </authorList>
    </citation>
    <scope>NUCLEOTIDE SEQUENCE [LARGE SCALE GENOMIC DNA]</scope>
    <source>
        <strain>ATCC 12472 / DSM 30191 / JCM 1249 / CCUG 213 / NBRC 12614 / NCIMB 9131 / NCTC 9757 / MK</strain>
    </source>
</reference>
<feature type="chain" id="PRO_0000121819" description="tRNA pseudouridine synthase B">
    <location>
        <begin position="1"/>
        <end position="306"/>
    </location>
</feature>
<feature type="active site" description="Nucleophile" evidence="1">
    <location>
        <position position="48"/>
    </location>
</feature>
<gene>
    <name evidence="1" type="primary">truB</name>
    <name type="ordered locus">CV_1464</name>
</gene>
<protein>
    <recommendedName>
        <fullName evidence="1">tRNA pseudouridine synthase B</fullName>
        <ecNumber evidence="1">5.4.99.25</ecNumber>
    </recommendedName>
    <alternativeName>
        <fullName evidence="1">tRNA pseudouridine(55) synthase</fullName>
        <shortName evidence="1">Psi55 synthase</shortName>
    </alternativeName>
    <alternativeName>
        <fullName evidence="1">tRNA pseudouridylate synthase</fullName>
    </alternativeName>
    <alternativeName>
        <fullName evidence="1">tRNA-uridine isomerase</fullName>
    </alternativeName>
</protein>
<organism>
    <name type="scientific">Chromobacterium violaceum (strain ATCC 12472 / DSM 30191 / JCM 1249 / CCUG 213 / NBRC 12614 / NCIMB 9131 / NCTC 9757 / MK)</name>
    <dbReference type="NCBI Taxonomy" id="243365"/>
    <lineage>
        <taxon>Bacteria</taxon>
        <taxon>Pseudomonadati</taxon>
        <taxon>Pseudomonadota</taxon>
        <taxon>Betaproteobacteria</taxon>
        <taxon>Neisseriales</taxon>
        <taxon>Chromobacteriaceae</taxon>
        <taxon>Chromobacterium</taxon>
    </lineage>
</organism>
<name>TRUB_CHRVO</name>
<comment type="function">
    <text evidence="1">Responsible for synthesis of pseudouridine from uracil-55 in the psi GC loop of transfer RNAs.</text>
</comment>
<comment type="catalytic activity">
    <reaction evidence="1">
        <text>uridine(55) in tRNA = pseudouridine(55) in tRNA</text>
        <dbReference type="Rhea" id="RHEA:42532"/>
        <dbReference type="Rhea" id="RHEA-COMP:10101"/>
        <dbReference type="Rhea" id="RHEA-COMP:10102"/>
        <dbReference type="ChEBI" id="CHEBI:65314"/>
        <dbReference type="ChEBI" id="CHEBI:65315"/>
        <dbReference type="EC" id="5.4.99.25"/>
    </reaction>
</comment>
<comment type="similarity">
    <text evidence="1">Belongs to the pseudouridine synthase TruB family. Type 1 subfamily.</text>
</comment>